<name>PPIE_PONAB</name>
<protein>
    <recommendedName>
        <fullName>Peptidyl-prolyl cis-trans isomerase E</fullName>
        <shortName>PPIase E</shortName>
        <ecNumber evidence="1">5.2.1.8</ecNumber>
    </recommendedName>
    <alternativeName>
        <fullName>Cyclophilin E</fullName>
    </alternativeName>
    <alternativeName>
        <fullName>Rotamase E</fullName>
    </alternativeName>
</protein>
<reference key="1">
    <citation type="submission" date="2004-11" db="EMBL/GenBank/DDBJ databases">
        <authorList>
            <consortium name="The German cDNA consortium"/>
        </authorList>
    </citation>
    <scope>NUCLEOTIDE SEQUENCE [LARGE SCALE MRNA]</scope>
    <source>
        <tissue>Brain cortex</tissue>
    </source>
</reference>
<evidence type="ECO:0000250" key="1">
    <source>
        <dbReference type="UniProtKB" id="Q9UNP9"/>
    </source>
</evidence>
<evidence type="ECO:0000255" key="2">
    <source>
        <dbReference type="PROSITE-ProRule" id="PRU00156"/>
    </source>
</evidence>
<evidence type="ECO:0000255" key="3">
    <source>
        <dbReference type="PROSITE-ProRule" id="PRU00176"/>
    </source>
</evidence>
<evidence type="ECO:0000256" key="4">
    <source>
        <dbReference type="SAM" id="MobiDB-lite"/>
    </source>
</evidence>
<evidence type="ECO:0000305" key="5"/>
<organism>
    <name type="scientific">Pongo abelii</name>
    <name type="common">Sumatran orangutan</name>
    <name type="synonym">Pongo pygmaeus abelii</name>
    <dbReference type="NCBI Taxonomy" id="9601"/>
    <lineage>
        <taxon>Eukaryota</taxon>
        <taxon>Metazoa</taxon>
        <taxon>Chordata</taxon>
        <taxon>Craniata</taxon>
        <taxon>Vertebrata</taxon>
        <taxon>Euteleostomi</taxon>
        <taxon>Mammalia</taxon>
        <taxon>Eutheria</taxon>
        <taxon>Euarchontoglires</taxon>
        <taxon>Primates</taxon>
        <taxon>Haplorrhini</taxon>
        <taxon>Catarrhini</taxon>
        <taxon>Hominidae</taxon>
        <taxon>Pongo</taxon>
    </lineage>
</organism>
<proteinExistence type="evidence at transcript level"/>
<dbReference type="EC" id="5.2.1.8" evidence="1"/>
<dbReference type="EMBL" id="CR860299">
    <property type="protein sequence ID" value="CAH92437.1"/>
    <property type="molecule type" value="mRNA"/>
</dbReference>
<dbReference type="RefSeq" id="NP_001126436.1">
    <property type="nucleotide sequence ID" value="NM_001132964.1"/>
</dbReference>
<dbReference type="BMRB" id="Q5R723"/>
<dbReference type="SMR" id="Q5R723"/>
<dbReference type="FunCoup" id="Q5R723">
    <property type="interactions" value="2826"/>
</dbReference>
<dbReference type="STRING" id="9601.ENSPPYP00000001735"/>
<dbReference type="GeneID" id="100173420"/>
<dbReference type="KEGG" id="pon:100173420"/>
<dbReference type="CTD" id="10450"/>
<dbReference type="eggNOG" id="KOG0111">
    <property type="taxonomic scope" value="Eukaryota"/>
</dbReference>
<dbReference type="InParanoid" id="Q5R723"/>
<dbReference type="OrthoDB" id="193499at2759"/>
<dbReference type="Proteomes" id="UP000001595">
    <property type="component" value="Unplaced"/>
</dbReference>
<dbReference type="GO" id="GO:0005739">
    <property type="term" value="C:mitochondrion"/>
    <property type="evidence" value="ECO:0007669"/>
    <property type="project" value="TreeGrafter"/>
</dbReference>
<dbReference type="GO" id="GO:0005634">
    <property type="term" value="C:nucleus"/>
    <property type="evidence" value="ECO:0000250"/>
    <property type="project" value="UniProtKB"/>
</dbReference>
<dbReference type="GO" id="GO:0071007">
    <property type="term" value="C:U2-type catalytic step 2 spliceosome"/>
    <property type="evidence" value="ECO:0000250"/>
    <property type="project" value="UniProtKB"/>
</dbReference>
<dbReference type="GO" id="GO:0016018">
    <property type="term" value="F:cyclosporin A binding"/>
    <property type="evidence" value="ECO:0007669"/>
    <property type="project" value="TreeGrafter"/>
</dbReference>
<dbReference type="GO" id="GO:0003729">
    <property type="term" value="F:mRNA binding"/>
    <property type="evidence" value="ECO:0000250"/>
    <property type="project" value="UniProtKB"/>
</dbReference>
<dbReference type="GO" id="GO:0003755">
    <property type="term" value="F:peptidyl-prolyl cis-trans isomerase activity"/>
    <property type="evidence" value="ECO:0000250"/>
    <property type="project" value="UniProtKB"/>
</dbReference>
<dbReference type="GO" id="GO:0008143">
    <property type="term" value="F:poly(A) binding"/>
    <property type="evidence" value="ECO:0000250"/>
    <property type="project" value="UniProtKB"/>
</dbReference>
<dbReference type="GO" id="GO:0000398">
    <property type="term" value="P:mRNA splicing, via spliceosome"/>
    <property type="evidence" value="ECO:0000250"/>
    <property type="project" value="UniProtKB"/>
</dbReference>
<dbReference type="GO" id="GO:0006457">
    <property type="term" value="P:protein folding"/>
    <property type="evidence" value="ECO:0007669"/>
    <property type="project" value="InterPro"/>
</dbReference>
<dbReference type="CDD" id="cd01926">
    <property type="entry name" value="cyclophilin_ABH_like"/>
    <property type="match status" value="1"/>
</dbReference>
<dbReference type="CDD" id="cd12347">
    <property type="entry name" value="RRM_PPIE"/>
    <property type="match status" value="1"/>
</dbReference>
<dbReference type="FunFam" id="2.40.100.10:FF:000010">
    <property type="entry name" value="Peptidyl-prolyl cis-trans isomerase E"/>
    <property type="match status" value="1"/>
</dbReference>
<dbReference type="FunFam" id="3.30.70.330:FF:000348">
    <property type="entry name" value="Peptidyl-prolyl cis-trans isomerase E"/>
    <property type="match status" value="1"/>
</dbReference>
<dbReference type="Gene3D" id="3.30.70.330">
    <property type="match status" value="1"/>
</dbReference>
<dbReference type="Gene3D" id="2.40.100.10">
    <property type="entry name" value="Cyclophilin-like"/>
    <property type="match status" value="1"/>
</dbReference>
<dbReference type="InterPro" id="IPR029000">
    <property type="entry name" value="Cyclophilin-like_dom_sf"/>
</dbReference>
<dbReference type="InterPro" id="IPR020892">
    <property type="entry name" value="Cyclophilin-type_PPIase_CS"/>
</dbReference>
<dbReference type="InterPro" id="IPR002130">
    <property type="entry name" value="Cyclophilin-type_PPIase_dom"/>
</dbReference>
<dbReference type="InterPro" id="IPR012677">
    <property type="entry name" value="Nucleotide-bd_a/b_plait_sf"/>
</dbReference>
<dbReference type="InterPro" id="IPR016304">
    <property type="entry name" value="PPIE"/>
</dbReference>
<dbReference type="InterPro" id="IPR034168">
    <property type="entry name" value="PPIE_RRM"/>
</dbReference>
<dbReference type="InterPro" id="IPR035979">
    <property type="entry name" value="RBD_domain_sf"/>
</dbReference>
<dbReference type="InterPro" id="IPR000504">
    <property type="entry name" value="RRM_dom"/>
</dbReference>
<dbReference type="PANTHER" id="PTHR11071">
    <property type="entry name" value="PEPTIDYL-PROLYL CIS-TRANS ISOMERASE"/>
    <property type="match status" value="1"/>
</dbReference>
<dbReference type="PANTHER" id="PTHR11071:SF561">
    <property type="entry name" value="PEPTIDYL-PROLYL CIS-TRANS ISOMERASE D-RELATED"/>
    <property type="match status" value="1"/>
</dbReference>
<dbReference type="Pfam" id="PF00160">
    <property type="entry name" value="Pro_isomerase"/>
    <property type="match status" value="1"/>
</dbReference>
<dbReference type="Pfam" id="PF00076">
    <property type="entry name" value="RRM_1"/>
    <property type="match status" value="1"/>
</dbReference>
<dbReference type="PIRSF" id="PIRSF001475">
    <property type="entry name" value="PPI_cyclophilin_E"/>
    <property type="match status" value="1"/>
</dbReference>
<dbReference type="PRINTS" id="PR00153">
    <property type="entry name" value="CSAPPISMRASE"/>
</dbReference>
<dbReference type="SMART" id="SM00360">
    <property type="entry name" value="RRM"/>
    <property type="match status" value="1"/>
</dbReference>
<dbReference type="SUPFAM" id="SSF50891">
    <property type="entry name" value="Cyclophilin-like"/>
    <property type="match status" value="1"/>
</dbReference>
<dbReference type="SUPFAM" id="SSF54928">
    <property type="entry name" value="RNA-binding domain, RBD"/>
    <property type="match status" value="1"/>
</dbReference>
<dbReference type="PROSITE" id="PS00170">
    <property type="entry name" value="CSA_PPIASE_1"/>
    <property type="match status" value="1"/>
</dbReference>
<dbReference type="PROSITE" id="PS50072">
    <property type="entry name" value="CSA_PPIASE_2"/>
    <property type="match status" value="1"/>
</dbReference>
<dbReference type="PROSITE" id="PS50102">
    <property type="entry name" value="RRM"/>
    <property type="match status" value="1"/>
</dbReference>
<feature type="chain" id="PRO_0000327216" description="Peptidyl-prolyl cis-trans isomerase E">
    <location>
        <begin position="1"/>
        <end position="301"/>
    </location>
</feature>
<feature type="domain" description="RRM" evidence="3">
    <location>
        <begin position="5"/>
        <end position="83"/>
    </location>
</feature>
<feature type="domain" description="PPIase cyclophilin-type" evidence="2">
    <location>
        <begin position="143"/>
        <end position="299"/>
    </location>
</feature>
<feature type="region of interest" description="Disordered" evidence="4">
    <location>
        <begin position="107"/>
        <end position="140"/>
    </location>
</feature>
<feature type="modified residue" description="Phosphoserine" evidence="1">
    <location>
        <position position="91"/>
    </location>
</feature>
<feature type="modified residue" description="Phosphoserine" evidence="1">
    <location>
        <position position="97"/>
    </location>
</feature>
<feature type="modified residue" description="Phosphoserine" evidence="1">
    <location>
        <position position="119"/>
    </location>
</feature>
<keyword id="KW-0413">Isomerase</keyword>
<keyword id="KW-0507">mRNA processing</keyword>
<keyword id="KW-0508">mRNA splicing</keyword>
<keyword id="KW-0539">Nucleus</keyword>
<keyword id="KW-0597">Phosphoprotein</keyword>
<keyword id="KW-1185">Reference proteome</keyword>
<keyword id="KW-0694">RNA-binding</keyword>
<keyword id="KW-0697">Rotamase</keyword>
<keyword id="KW-0747">Spliceosome</keyword>
<accession>Q5R723</accession>
<sequence length="301" mass="33417">MATTKRVLYVGGLAEEVDDKVLHAAFIPFGDITDIQIPLDYETEKHRGFAFVEFELAEDAAAAIDNMNESELFGRTIRVNLAKPMRIKEGSSRPVWSDDDWLKKFSGKTLEENKEEEGSEPPKAETQEGEPAAKKARSNPQVYMDIKIGNKPAGRIQMLLRSDVVPMTAENFRCLCTHEKGFGFKGSSFHRIIPQFMCQGGDFTNHNGTGGKSIYGKKFDDENFILKHTGPGLLSMANSGPNTNGSQFFLTCDKTDWLDGKHVVFGEVTEGLDVLRQIEARGSKDGKPKQKVIIADCGEYV</sequence>
<gene>
    <name type="primary">PPIE</name>
</gene>
<comment type="function">
    <text evidence="1">Involved in pre-mRNA splicing as component of the spliceosome. Combines RNA-binding and PPIase activities. Binds mRNA and has a preference for single-stranded RNA molecules with poly-A and poly-U stretches, suggesting it binds to the poly(A)-region in the 3'-UTR of mRNA molecules. Catalyzes the cis-trans isomerization of proline imidic peptide bonds in proteins. Inhibits KMT2A activity; this requires proline isomerase activity.</text>
</comment>
<comment type="catalytic activity">
    <reaction evidence="1">
        <text>[protein]-peptidylproline (omega=180) = [protein]-peptidylproline (omega=0)</text>
        <dbReference type="Rhea" id="RHEA:16237"/>
        <dbReference type="Rhea" id="RHEA-COMP:10747"/>
        <dbReference type="Rhea" id="RHEA-COMP:10748"/>
        <dbReference type="ChEBI" id="CHEBI:83833"/>
        <dbReference type="ChEBI" id="CHEBI:83834"/>
        <dbReference type="EC" id="5.2.1.8"/>
    </reaction>
</comment>
<comment type="subunit">
    <text evidence="1">Identified in the spliceosome C complex. Component of the XAB2 complex, a multimeric protein complex composed of XAB2, PRPF19, AQR, ZNF830, ISY1, and PPIE. Identified in a pentameric intron-binding (IB) complex composed of AQR, XAB2, ISY1, ZNF830 and PPIE that is incorporated into the spliceosome as a preassembled complex. The IB complex does not contain PRPF19. Interacts (via RNA-binding domain) with KMT2A (via the third PHD-type zinc-finger).</text>
</comment>
<comment type="subcellular location">
    <subcellularLocation>
        <location evidence="1">Nucleus</location>
    </subcellularLocation>
</comment>
<comment type="domain">
    <text evidence="1">The RRM domain mediates both interaction with RNA and with KMT2A (via the third PHD-type zinc-finger), but has much higher affinity for the KMT2A PHD-type zinc-finger.</text>
</comment>
<comment type="similarity">
    <text evidence="5">Belongs to the cyclophilin-type PPIase family. PPIase E subfamily.</text>
</comment>